<organism>
    <name type="scientific">Candida albicans (strain SC5314 / ATCC MYA-2876)</name>
    <name type="common">Yeast</name>
    <dbReference type="NCBI Taxonomy" id="237561"/>
    <lineage>
        <taxon>Eukaryota</taxon>
        <taxon>Fungi</taxon>
        <taxon>Dikarya</taxon>
        <taxon>Ascomycota</taxon>
        <taxon>Saccharomycotina</taxon>
        <taxon>Pichiomycetes</taxon>
        <taxon>Debaryomycetaceae</taxon>
        <taxon>Candida/Lodderomyces clade</taxon>
        <taxon>Candida</taxon>
    </lineage>
</organism>
<evidence type="ECO:0000250" key="1"/>
<evidence type="ECO:0000255" key="2">
    <source>
        <dbReference type="PROSITE-ProRule" id="PRU00541"/>
    </source>
</evidence>
<evidence type="ECO:0000255" key="3">
    <source>
        <dbReference type="PROSITE-ProRule" id="PRU00542"/>
    </source>
</evidence>
<evidence type="ECO:0000256" key="4">
    <source>
        <dbReference type="SAM" id="MobiDB-lite"/>
    </source>
</evidence>
<evidence type="ECO:0000305" key="5"/>
<protein>
    <recommendedName>
        <fullName>ATP-dependent RNA helicase CHR1</fullName>
        <ecNumber>3.6.4.13</ecNumber>
    </recommendedName>
</protein>
<gene>
    <name type="primary">CHR1</name>
    <name type="synonym">ROK1</name>
    <name type="ordered locus">CAALFM_C112600CA</name>
    <name type="ORF">CaO19.11240</name>
    <name type="ORF">CaO19.3756</name>
</gene>
<comment type="function">
    <text>ATP-dependent RNA helicase involved in 40S ribosomal subunit biogenesis. Required for the processing and cleavage of 35S pre-rRNA at sites A0, A1, and A2, leading to mature 18S rRNA.</text>
</comment>
<comment type="catalytic activity">
    <reaction>
        <text>ATP + H2O = ADP + phosphate + H(+)</text>
        <dbReference type="Rhea" id="RHEA:13065"/>
        <dbReference type="ChEBI" id="CHEBI:15377"/>
        <dbReference type="ChEBI" id="CHEBI:15378"/>
        <dbReference type="ChEBI" id="CHEBI:30616"/>
        <dbReference type="ChEBI" id="CHEBI:43474"/>
        <dbReference type="ChEBI" id="CHEBI:456216"/>
        <dbReference type="EC" id="3.6.4.13"/>
    </reaction>
</comment>
<comment type="subunit">
    <text evidence="1">Interacts with the U3 snoRNA and is associated with the 90S and 40S pre-ribosomes.</text>
</comment>
<comment type="subcellular location">
    <subcellularLocation>
        <location evidence="1">Nucleus</location>
        <location evidence="1">Nucleolus</location>
    </subcellularLocation>
</comment>
<comment type="domain">
    <text>The Q motif is unique to and characteristic of the DEAD box family of RNA helicases and controls ATP binding and hydrolysis.</text>
</comment>
<comment type="similarity">
    <text evidence="5">Belongs to the DEAD box helicase family. DDX52/ROK1 subfamily.</text>
</comment>
<comment type="sequence caution" evidence="5">
    <conflict type="erroneous initiation">
        <sequence resource="EMBL-CDS" id="AOW26875"/>
    </conflict>
    <text>Extended N-terminus.</text>
</comment>
<keyword id="KW-0067">ATP-binding</keyword>
<keyword id="KW-0347">Helicase</keyword>
<keyword id="KW-0378">Hydrolase</keyword>
<keyword id="KW-0547">Nucleotide-binding</keyword>
<keyword id="KW-0539">Nucleus</keyword>
<keyword id="KW-1185">Reference proteome</keyword>
<keyword id="KW-0690">Ribosome biogenesis</keyword>
<keyword id="KW-0694">RNA-binding</keyword>
<keyword id="KW-0698">rRNA processing</keyword>
<accession>Q9Y7C4</accession>
<accession>A0A1D8PFI1</accession>
<accession>Q59M31</accession>
<name>ROK1_CANAL</name>
<sequence length="578" mass="65427">MDIFRILSRGASLNKKKGITTDYALPSEKQTQKQKHKQESLLNEVERETDFFHTRKHNSNSTTTSGKGDKLTNGANSNKEEQMETNETKAKEEEIPPPELTTEEDAQTFRNLHKSKVTGDDIPIPIGSFQDMIGRFHINKKVLSNLIDNEFVEPTPIQCESIPITLNNRDLIACAPTGSGKTLAFLIPLVQQILSKNVSKNHGIRGLIISPTNELAVQIFQELEIITRGCKQINVAILSKQLASKLNNNIIKSSKYDIIVSTPLRLIDVVKQGNMDLSKIEQLIIDEADKLFDHGFAEQTDEILTHCTNPKIRKSIFSATIPSSVEEMAHSIMKDPLRIIIGHKEAASNTIDQKLVFTGNEQGKLLAIRQMIQQGEFKPPIIIFLQSITRAKALFHELLYDRLNVDVIHAERTPKQREEVIKRFKNGDIWVLITTDVLARGVDFKGVNLVINYDVPQSAQAYVHRIGRTGRGGKAGKAVTFFTKEDDKAIKPILNVMKQSGCNDGYSQWMEDMGKLSKKEKKQIKTHEIQRKKISTVPKVIKQKRKQRQDMIAASKRRKQESKQESKQESHSNDEREE</sequence>
<dbReference type="EC" id="3.6.4.13"/>
<dbReference type="EMBL" id="AF140505">
    <property type="protein sequence ID" value="AAD26468.1"/>
    <property type="molecule type" value="Genomic_DNA"/>
</dbReference>
<dbReference type="EMBL" id="CP017623">
    <property type="protein sequence ID" value="AOW26875.1"/>
    <property type="status" value="ALT_INIT"/>
    <property type="molecule type" value="Genomic_DNA"/>
</dbReference>
<dbReference type="RefSeq" id="XP_710786.2">
    <property type="nucleotide sequence ID" value="XM_705694.2"/>
</dbReference>
<dbReference type="SMR" id="Q9Y7C4"/>
<dbReference type="FunCoup" id="Q9Y7C4">
    <property type="interactions" value="1088"/>
</dbReference>
<dbReference type="STRING" id="237561.Q9Y7C4"/>
<dbReference type="GeneID" id="3647601"/>
<dbReference type="KEGG" id="cal:CAALFM_C112600CA"/>
<dbReference type="eggNOG" id="KOG0344">
    <property type="taxonomic scope" value="Eukaryota"/>
</dbReference>
<dbReference type="HOGENOM" id="CLU_003041_1_4_1"/>
<dbReference type="InParanoid" id="Q9Y7C4"/>
<dbReference type="OrthoDB" id="360161at2759"/>
<dbReference type="PRO" id="PR:Q9Y7C4"/>
<dbReference type="Proteomes" id="UP000000559">
    <property type="component" value="Chromosome 1"/>
</dbReference>
<dbReference type="GO" id="GO:0005730">
    <property type="term" value="C:nucleolus"/>
    <property type="evidence" value="ECO:0007669"/>
    <property type="project" value="UniProtKB-SubCell"/>
</dbReference>
<dbReference type="GO" id="GO:0005524">
    <property type="term" value="F:ATP binding"/>
    <property type="evidence" value="ECO:0007669"/>
    <property type="project" value="UniProtKB-KW"/>
</dbReference>
<dbReference type="GO" id="GO:0016887">
    <property type="term" value="F:ATP hydrolysis activity"/>
    <property type="evidence" value="ECO:0007669"/>
    <property type="project" value="RHEA"/>
</dbReference>
<dbReference type="GO" id="GO:0003723">
    <property type="term" value="F:RNA binding"/>
    <property type="evidence" value="ECO:0007669"/>
    <property type="project" value="UniProtKB-KW"/>
</dbReference>
<dbReference type="GO" id="GO:0003724">
    <property type="term" value="F:RNA helicase activity"/>
    <property type="evidence" value="ECO:0007669"/>
    <property type="project" value="UniProtKB-EC"/>
</dbReference>
<dbReference type="GO" id="GO:0030490">
    <property type="term" value="P:maturation of SSU-rRNA"/>
    <property type="evidence" value="ECO:0000318"/>
    <property type="project" value="GO_Central"/>
</dbReference>
<dbReference type="CDD" id="cd17957">
    <property type="entry name" value="DEADc_DDX52"/>
    <property type="match status" value="1"/>
</dbReference>
<dbReference type="CDD" id="cd18787">
    <property type="entry name" value="SF2_C_DEAD"/>
    <property type="match status" value="1"/>
</dbReference>
<dbReference type="FunFam" id="3.40.50.300:FF:000759">
    <property type="entry name" value="probable ATP-dependent RNA helicase DDX52"/>
    <property type="match status" value="1"/>
</dbReference>
<dbReference type="Gene3D" id="3.40.50.300">
    <property type="entry name" value="P-loop containing nucleotide triphosphate hydrolases"/>
    <property type="match status" value="2"/>
</dbReference>
<dbReference type="InterPro" id="IPR044764">
    <property type="entry name" value="DDX52/Rok1_DEADc"/>
</dbReference>
<dbReference type="InterPro" id="IPR011545">
    <property type="entry name" value="DEAD/DEAH_box_helicase_dom"/>
</dbReference>
<dbReference type="InterPro" id="IPR050079">
    <property type="entry name" value="DEAD_box_RNA_helicase"/>
</dbReference>
<dbReference type="InterPro" id="IPR014001">
    <property type="entry name" value="Helicase_ATP-bd"/>
</dbReference>
<dbReference type="InterPro" id="IPR001650">
    <property type="entry name" value="Helicase_C-like"/>
</dbReference>
<dbReference type="InterPro" id="IPR027417">
    <property type="entry name" value="P-loop_NTPase"/>
</dbReference>
<dbReference type="InterPro" id="IPR000629">
    <property type="entry name" value="RNA-helicase_DEAD-box_CS"/>
</dbReference>
<dbReference type="PANTHER" id="PTHR47959">
    <property type="entry name" value="ATP-DEPENDENT RNA HELICASE RHLE-RELATED"/>
    <property type="match status" value="1"/>
</dbReference>
<dbReference type="PANTHER" id="PTHR47959:SF15">
    <property type="entry name" value="RNA HELICASE"/>
    <property type="match status" value="1"/>
</dbReference>
<dbReference type="Pfam" id="PF00270">
    <property type="entry name" value="DEAD"/>
    <property type="match status" value="1"/>
</dbReference>
<dbReference type="Pfam" id="PF00271">
    <property type="entry name" value="Helicase_C"/>
    <property type="match status" value="1"/>
</dbReference>
<dbReference type="SMART" id="SM00487">
    <property type="entry name" value="DEXDc"/>
    <property type="match status" value="1"/>
</dbReference>
<dbReference type="SMART" id="SM00490">
    <property type="entry name" value="HELICc"/>
    <property type="match status" value="1"/>
</dbReference>
<dbReference type="SUPFAM" id="SSF52540">
    <property type="entry name" value="P-loop containing nucleoside triphosphate hydrolases"/>
    <property type="match status" value="1"/>
</dbReference>
<dbReference type="PROSITE" id="PS00039">
    <property type="entry name" value="DEAD_ATP_HELICASE"/>
    <property type="match status" value="1"/>
</dbReference>
<dbReference type="PROSITE" id="PS51192">
    <property type="entry name" value="HELICASE_ATP_BIND_1"/>
    <property type="match status" value="1"/>
</dbReference>
<dbReference type="PROSITE" id="PS51194">
    <property type="entry name" value="HELICASE_CTER"/>
    <property type="match status" value="1"/>
</dbReference>
<dbReference type="PROSITE" id="PS51195">
    <property type="entry name" value="Q_MOTIF"/>
    <property type="match status" value="1"/>
</dbReference>
<reference key="1">
    <citation type="journal article" date="2000" name="Yeast">
        <title>Identification of a putative DEAD-box RNA helicase and a zinc-finger protein in Candida albicans by functional complementation of the S. cerevisiae rok1 mutation.</title>
        <authorList>
            <person name="Kim W.I."/>
            <person name="Lee W.B."/>
            <person name="Song K."/>
            <person name="Kim J."/>
        </authorList>
    </citation>
    <scope>NUCLEOTIDE SEQUENCE [GENOMIC DNA]</scope>
    <source>
        <strain>SC5314 / CAI4 / ATCC MYA-682</strain>
    </source>
</reference>
<reference key="2">
    <citation type="journal article" date="2004" name="Proc. Natl. Acad. Sci. U.S.A.">
        <title>The diploid genome sequence of Candida albicans.</title>
        <authorList>
            <person name="Jones T."/>
            <person name="Federspiel N.A."/>
            <person name="Chibana H."/>
            <person name="Dungan J."/>
            <person name="Kalman S."/>
            <person name="Magee B.B."/>
            <person name="Newport G."/>
            <person name="Thorstenson Y.R."/>
            <person name="Agabian N."/>
            <person name="Magee P.T."/>
            <person name="Davis R.W."/>
            <person name="Scherer S."/>
        </authorList>
    </citation>
    <scope>NUCLEOTIDE SEQUENCE [LARGE SCALE GENOMIC DNA]</scope>
    <source>
        <strain>SC5314 / ATCC MYA-2876</strain>
    </source>
</reference>
<reference key="3">
    <citation type="journal article" date="2007" name="Genome Biol.">
        <title>Assembly of the Candida albicans genome into sixteen supercontigs aligned on the eight chromosomes.</title>
        <authorList>
            <person name="van het Hoog M."/>
            <person name="Rast T.J."/>
            <person name="Martchenko M."/>
            <person name="Grindle S."/>
            <person name="Dignard D."/>
            <person name="Hogues H."/>
            <person name="Cuomo C."/>
            <person name="Berriman M."/>
            <person name="Scherer S."/>
            <person name="Magee B.B."/>
            <person name="Whiteway M."/>
            <person name="Chibana H."/>
            <person name="Nantel A."/>
            <person name="Magee P.T."/>
        </authorList>
    </citation>
    <scope>GENOME REANNOTATION</scope>
    <source>
        <strain>SC5314 / ATCC MYA-2876</strain>
    </source>
</reference>
<reference key="4">
    <citation type="journal article" date="2013" name="Genome Biol.">
        <title>Assembly of a phased diploid Candida albicans genome facilitates allele-specific measurements and provides a simple model for repeat and indel structure.</title>
        <authorList>
            <person name="Muzzey D."/>
            <person name="Schwartz K."/>
            <person name="Weissman J.S."/>
            <person name="Sherlock G."/>
        </authorList>
    </citation>
    <scope>NUCLEOTIDE SEQUENCE [LARGE SCALE GENOMIC DNA]</scope>
    <scope>GENOME REANNOTATION</scope>
    <source>
        <strain>SC5314 / ATCC MYA-2876</strain>
    </source>
</reference>
<proteinExistence type="inferred from homology"/>
<feature type="chain" id="PRO_0000232300" description="ATP-dependent RNA helicase CHR1">
    <location>
        <begin position="1"/>
        <end position="578"/>
    </location>
</feature>
<feature type="domain" description="Helicase ATP-binding" evidence="2">
    <location>
        <begin position="162"/>
        <end position="339"/>
    </location>
</feature>
<feature type="domain" description="Helicase C-terminal" evidence="3">
    <location>
        <begin position="350"/>
        <end position="514"/>
    </location>
</feature>
<feature type="region of interest" description="Disordered" evidence="4">
    <location>
        <begin position="1"/>
        <end position="95"/>
    </location>
</feature>
<feature type="region of interest" description="Disordered" evidence="4">
    <location>
        <begin position="517"/>
        <end position="578"/>
    </location>
</feature>
<feature type="short sequence motif" description="Q motif">
    <location>
        <begin position="131"/>
        <end position="159"/>
    </location>
</feature>
<feature type="short sequence motif" description="DEAD box">
    <location>
        <begin position="286"/>
        <end position="289"/>
    </location>
</feature>
<feature type="compositionally biased region" description="Basic and acidic residues" evidence="4">
    <location>
        <begin position="44"/>
        <end position="53"/>
    </location>
</feature>
<feature type="compositionally biased region" description="Basic and acidic residues" evidence="4">
    <location>
        <begin position="78"/>
        <end position="94"/>
    </location>
</feature>
<feature type="compositionally biased region" description="Basic and acidic residues" evidence="4">
    <location>
        <begin position="517"/>
        <end position="531"/>
    </location>
</feature>
<feature type="compositionally biased region" description="Basic and acidic residues" evidence="4">
    <location>
        <begin position="561"/>
        <end position="578"/>
    </location>
</feature>
<feature type="binding site" evidence="2">
    <location>
        <begin position="175"/>
        <end position="182"/>
    </location>
    <ligand>
        <name>ATP</name>
        <dbReference type="ChEBI" id="CHEBI:30616"/>
    </ligand>
</feature>
<feature type="sequence conflict" description="In Ref. 1; AAD26468." evidence="5" ref="1">
    <original>S</original>
    <variation>N</variation>
    <location>
        <position position="65"/>
    </location>
</feature>
<feature type="sequence conflict" description="In Ref. 1; AAD26468." evidence="5" ref="1">
    <original>V</original>
    <variation>I</variation>
    <location>
        <position position="152"/>
    </location>
</feature>
<feature type="sequence conflict" description="In Ref. 1; AAD26468." evidence="5" ref="1">
    <original>P</original>
    <variation>L</variation>
    <location>
        <position position="310"/>
    </location>
</feature>
<feature type="sequence conflict" description="In Ref. 1; AAD26468." evidence="5" ref="1">
    <original>E</original>
    <variation>K</variation>
    <location>
        <position position="565"/>
    </location>
</feature>